<gene>
    <name evidence="1" type="primary">gap</name>
    <name type="ordered locus">M1627_1697</name>
</gene>
<comment type="catalytic activity">
    <reaction evidence="1">
        <text>D-glyceraldehyde 3-phosphate + phosphate + NADP(+) = (2R)-3-phospho-glyceroyl phosphate + NADPH + H(+)</text>
        <dbReference type="Rhea" id="RHEA:10296"/>
        <dbReference type="ChEBI" id="CHEBI:15378"/>
        <dbReference type="ChEBI" id="CHEBI:43474"/>
        <dbReference type="ChEBI" id="CHEBI:57604"/>
        <dbReference type="ChEBI" id="CHEBI:57783"/>
        <dbReference type="ChEBI" id="CHEBI:58349"/>
        <dbReference type="ChEBI" id="CHEBI:59776"/>
        <dbReference type="EC" id="1.2.1.59"/>
    </reaction>
</comment>
<comment type="catalytic activity">
    <reaction evidence="1">
        <text>D-glyceraldehyde 3-phosphate + phosphate + NAD(+) = (2R)-3-phospho-glyceroyl phosphate + NADH + H(+)</text>
        <dbReference type="Rhea" id="RHEA:10300"/>
        <dbReference type="ChEBI" id="CHEBI:15378"/>
        <dbReference type="ChEBI" id="CHEBI:43474"/>
        <dbReference type="ChEBI" id="CHEBI:57540"/>
        <dbReference type="ChEBI" id="CHEBI:57604"/>
        <dbReference type="ChEBI" id="CHEBI:57945"/>
        <dbReference type="ChEBI" id="CHEBI:59776"/>
        <dbReference type="EC" id="1.2.1.59"/>
    </reaction>
</comment>
<comment type="pathway">
    <text evidence="1">Carbohydrate degradation; glycolysis; pyruvate from D-glyceraldehyde 3-phosphate: step 1/5.</text>
</comment>
<comment type="subunit">
    <text evidence="1">Homotetramer.</text>
</comment>
<comment type="subcellular location">
    <subcellularLocation>
        <location evidence="1">Cytoplasm</location>
    </subcellularLocation>
</comment>
<comment type="similarity">
    <text evidence="1">Belongs to the glyceraldehyde-3-phosphate dehydrogenase family.</text>
</comment>
<protein>
    <recommendedName>
        <fullName evidence="1">Glyceraldehyde-3-phosphate dehydrogenase</fullName>
        <shortName evidence="1">GAPDH</shortName>
        <ecNumber evidence="1">1.2.1.59</ecNumber>
    </recommendedName>
    <alternativeName>
        <fullName evidence="1">NAD(P)-dependent glyceraldehyde-3-phosphate dehydrogenase</fullName>
    </alternativeName>
</protein>
<evidence type="ECO:0000255" key="1">
    <source>
        <dbReference type="HAMAP-Rule" id="MF_00559"/>
    </source>
</evidence>
<name>G3P_SACI3</name>
<organism>
    <name type="scientific">Saccharolobus islandicus (strain M.16.27)</name>
    <name type="common">Sulfolobus islandicus</name>
    <dbReference type="NCBI Taxonomy" id="427318"/>
    <lineage>
        <taxon>Archaea</taxon>
        <taxon>Thermoproteota</taxon>
        <taxon>Thermoprotei</taxon>
        <taxon>Sulfolobales</taxon>
        <taxon>Sulfolobaceae</taxon>
        <taxon>Saccharolobus</taxon>
    </lineage>
</organism>
<keyword id="KW-0963">Cytoplasm</keyword>
<keyword id="KW-0324">Glycolysis</keyword>
<keyword id="KW-0520">NAD</keyword>
<keyword id="KW-0521">NADP</keyword>
<keyword id="KW-0560">Oxidoreductase</keyword>
<accession>C3N6F0</accession>
<proteinExistence type="inferred from homology"/>
<reference key="1">
    <citation type="journal article" date="2009" name="Proc. Natl. Acad. Sci. U.S.A.">
        <title>Biogeography of the Sulfolobus islandicus pan-genome.</title>
        <authorList>
            <person name="Reno M.L."/>
            <person name="Held N.L."/>
            <person name="Fields C.J."/>
            <person name="Burke P.V."/>
            <person name="Whitaker R.J."/>
        </authorList>
    </citation>
    <scope>NUCLEOTIDE SEQUENCE [LARGE SCALE GENOMIC DNA]</scope>
    <source>
        <strain>M.16.27</strain>
    </source>
</reference>
<dbReference type="EC" id="1.2.1.59" evidence="1"/>
<dbReference type="EMBL" id="CP001401">
    <property type="protein sequence ID" value="ACP55575.1"/>
    <property type="molecule type" value="Genomic_DNA"/>
</dbReference>
<dbReference type="RefSeq" id="WP_012716227.1">
    <property type="nucleotide sequence ID" value="NC_012632.1"/>
</dbReference>
<dbReference type="SMR" id="C3N6F0"/>
<dbReference type="KEGG" id="sim:M1627_1697"/>
<dbReference type="HOGENOM" id="CLU_069533_0_0_2"/>
<dbReference type="UniPathway" id="UPA00109">
    <property type="reaction ID" value="UER00184"/>
</dbReference>
<dbReference type="Proteomes" id="UP000002307">
    <property type="component" value="Chromosome"/>
</dbReference>
<dbReference type="GO" id="GO:0005737">
    <property type="term" value="C:cytoplasm"/>
    <property type="evidence" value="ECO:0007669"/>
    <property type="project" value="UniProtKB-SubCell"/>
</dbReference>
<dbReference type="GO" id="GO:0008839">
    <property type="term" value="F:4-hydroxy-tetrahydrodipicolinate reductase"/>
    <property type="evidence" value="ECO:0007669"/>
    <property type="project" value="InterPro"/>
</dbReference>
<dbReference type="GO" id="GO:0004365">
    <property type="term" value="F:glyceraldehyde-3-phosphate dehydrogenase (NAD+) (phosphorylating) activity"/>
    <property type="evidence" value="ECO:0007669"/>
    <property type="project" value="UniProtKB-UniRule"/>
</dbReference>
<dbReference type="GO" id="GO:0047100">
    <property type="term" value="F:glyceraldehyde-3-phosphate dehydrogenase (NADP+) (phosphorylating) activity"/>
    <property type="evidence" value="ECO:0007669"/>
    <property type="project" value="RHEA"/>
</dbReference>
<dbReference type="GO" id="GO:0051287">
    <property type="term" value="F:NAD binding"/>
    <property type="evidence" value="ECO:0007669"/>
    <property type="project" value="InterPro"/>
</dbReference>
<dbReference type="GO" id="GO:0050661">
    <property type="term" value="F:NADP binding"/>
    <property type="evidence" value="ECO:0007669"/>
    <property type="project" value="InterPro"/>
</dbReference>
<dbReference type="GO" id="GO:0006096">
    <property type="term" value="P:glycolytic process"/>
    <property type="evidence" value="ECO:0007669"/>
    <property type="project" value="UniProtKB-UniRule"/>
</dbReference>
<dbReference type="GO" id="GO:0009089">
    <property type="term" value="P:lysine biosynthetic process via diaminopimelate"/>
    <property type="evidence" value="ECO:0007669"/>
    <property type="project" value="InterPro"/>
</dbReference>
<dbReference type="CDD" id="cd18127">
    <property type="entry name" value="GAPDH_II_C"/>
    <property type="match status" value="1"/>
</dbReference>
<dbReference type="CDD" id="cd02278">
    <property type="entry name" value="GAPDH_II_N"/>
    <property type="match status" value="1"/>
</dbReference>
<dbReference type="Gene3D" id="3.30.360.10">
    <property type="entry name" value="Dihydrodipicolinate Reductase, domain 2"/>
    <property type="match status" value="1"/>
</dbReference>
<dbReference type="Gene3D" id="3.40.50.720">
    <property type="entry name" value="NAD(P)-binding Rossmann-like Domain"/>
    <property type="match status" value="1"/>
</dbReference>
<dbReference type="HAMAP" id="MF_00559">
    <property type="entry name" value="G3P_dehdrog_arch"/>
    <property type="match status" value="1"/>
</dbReference>
<dbReference type="InterPro" id="IPR000846">
    <property type="entry name" value="DapB_N"/>
</dbReference>
<dbReference type="InterPro" id="IPR020831">
    <property type="entry name" value="GlycerAld/Erythrose_P_DH"/>
</dbReference>
<dbReference type="InterPro" id="IPR020830">
    <property type="entry name" value="GlycerAld_3-P_DH_AS"/>
</dbReference>
<dbReference type="InterPro" id="IPR020829">
    <property type="entry name" value="GlycerAld_3-P_DH_cat"/>
</dbReference>
<dbReference type="InterPro" id="IPR020828">
    <property type="entry name" value="GlycerAld_3-P_DH_NAD(P)-bd"/>
</dbReference>
<dbReference type="InterPro" id="IPR006436">
    <property type="entry name" value="Glyceraldehyde-3-P_DH_2_arc"/>
</dbReference>
<dbReference type="InterPro" id="IPR036291">
    <property type="entry name" value="NAD(P)-bd_dom_sf"/>
</dbReference>
<dbReference type="NCBIfam" id="TIGR01546">
    <property type="entry name" value="GAPDH-II_archae"/>
    <property type="match status" value="1"/>
</dbReference>
<dbReference type="NCBIfam" id="NF003251">
    <property type="entry name" value="PRK04207.1"/>
    <property type="match status" value="1"/>
</dbReference>
<dbReference type="Pfam" id="PF01113">
    <property type="entry name" value="DapB_N"/>
    <property type="match status" value="1"/>
</dbReference>
<dbReference type="Pfam" id="PF02800">
    <property type="entry name" value="Gp_dh_C"/>
    <property type="match status" value="1"/>
</dbReference>
<dbReference type="PIRSF" id="PIRSF000149">
    <property type="entry name" value="GAP_DH"/>
    <property type="match status" value="1"/>
</dbReference>
<dbReference type="SMART" id="SM00846">
    <property type="entry name" value="Gp_dh_N"/>
    <property type="match status" value="1"/>
</dbReference>
<dbReference type="SUPFAM" id="SSF55347">
    <property type="entry name" value="Glyceraldehyde-3-phosphate dehydrogenase-like, C-terminal domain"/>
    <property type="match status" value="1"/>
</dbReference>
<dbReference type="SUPFAM" id="SSF51735">
    <property type="entry name" value="NAD(P)-binding Rossmann-fold domains"/>
    <property type="match status" value="1"/>
</dbReference>
<dbReference type="PROSITE" id="PS00071">
    <property type="entry name" value="GAPDH"/>
    <property type="match status" value="1"/>
</dbReference>
<sequence>MISVAVNGYGTIGKRVADAILKQPDMRLVGVAKTSPNYEAFIAHRKGIKIYVPQQSIKKFEESGIPVAGTIEDLVKASDIVVDTTPNGVGAQYKPIYQQFQRNAIFQGGEKAEVADISFSALCNYDEALGKKYIRVVSCNTTALLRTICTINKVTKVEKVRATIVRRAADQKEVKKGPINSLVPDPATVPSHHAKDVNSVIKNLDIVTMAVIAPTTLMHMHFINITLKDKVEKKDVLSVLENTPRIVLISSKYDAEATAELVEVARDLKRERNDIPEVMVFDDSVYVKDNEVMLMYAVHQESIVVPENVDAIRASTRLMSAEDSIRITNESLGILKGYLI</sequence>
<feature type="chain" id="PRO_1000212035" description="Glyceraldehyde-3-phosphate dehydrogenase">
    <location>
        <begin position="1"/>
        <end position="340"/>
    </location>
</feature>
<feature type="active site" description="Nucleophile" evidence="1">
    <location>
        <position position="139"/>
    </location>
</feature>
<feature type="binding site" evidence="1">
    <location>
        <begin position="11"/>
        <end position="12"/>
    </location>
    <ligand>
        <name>NAD(+)</name>
        <dbReference type="ChEBI" id="CHEBI:57540"/>
    </ligand>
</feature>
<feature type="binding site" evidence="1">
    <location>
        <position position="109"/>
    </location>
    <ligand>
        <name>NAD(+)</name>
        <dbReference type="ChEBI" id="CHEBI:57540"/>
    </ligand>
</feature>
<feature type="binding site" evidence="1">
    <location>
        <begin position="138"/>
        <end position="140"/>
    </location>
    <ligand>
        <name>D-glyceraldehyde 3-phosphate</name>
        <dbReference type="ChEBI" id="CHEBI:59776"/>
    </ligand>
</feature>
<feature type="binding site" evidence="1">
    <location>
        <position position="167"/>
    </location>
    <ligand>
        <name>NAD(+)</name>
        <dbReference type="ChEBI" id="CHEBI:57540"/>
    </ligand>
</feature>
<feature type="binding site" evidence="1">
    <location>
        <begin position="193"/>
        <end position="194"/>
    </location>
    <ligand>
        <name>D-glyceraldehyde 3-phosphate</name>
        <dbReference type="ChEBI" id="CHEBI:59776"/>
    </ligand>
</feature>
<feature type="binding site" evidence="1">
    <location>
        <position position="300"/>
    </location>
    <ligand>
        <name>NAD(+)</name>
        <dbReference type="ChEBI" id="CHEBI:57540"/>
    </ligand>
</feature>